<dbReference type="EMBL" id="AP009376">
    <property type="protein sequence ID" value="BAF50631.1"/>
    <property type="molecule type" value="Genomic_DNA"/>
</dbReference>
<dbReference type="RefSeq" id="YP_001123807.1">
    <property type="nucleotide sequence ID" value="NC_009275.1"/>
</dbReference>
<dbReference type="SMR" id="A4QLS6"/>
<dbReference type="GeneID" id="4962123"/>
<dbReference type="GO" id="GO:0009535">
    <property type="term" value="C:chloroplast thylakoid membrane"/>
    <property type="evidence" value="ECO:0007669"/>
    <property type="project" value="UniProtKB-SubCell"/>
</dbReference>
<dbReference type="GO" id="GO:0009512">
    <property type="term" value="C:cytochrome b6f complex"/>
    <property type="evidence" value="ECO:0007669"/>
    <property type="project" value="InterPro"/>
</dbReference>
<dbReference type="GO" id="GO:0045158">
    <property type="term" value="F:electron transporter, transferring electrons within cytochrome b6/f complex of photosystem II activity"/>
    <property type="evidence" value="ECO:0007669"/>
    <property type="project" value="InterPro"/>
</dbReference>
<dbReference type="GO" id="GO:0017004">
    <property type="term" value="P:cytochrome complex assembly"/>
    <property type="evidence" value="ECO:0007669"/>
    <property type="project" value="UniProtKB-UniRule"/>
</dbReference>
<dbReference type="GO" id="GO:0015979">
    <property type="term" value="P:photosynthesis"/>
    <property type="evidence" value="ECO:0007669"/>
    <property type="project" value="UniProtKB-KW"/>
</dbReference>
<dbReference type="HAMAP" id="MF_00395">
    <property type="entry name" value="Cytb6_f_PetN"/>
    <property type="match status" value="1"/>
</dbReference>
<dbReference type="InterPro" id="IPR036143">
    <property type="entry name" value="Cytochr_b6-f_cplx_su8_sf"/>
</dbReference>
<dbReference type="InterPro" id="IPR005497">
    <property type="entry name" value="Cytochrome_b6-f_cplx_su8"/>
</dbReference>
<dbReference type="Pfam" id="PF03742">
    <property type="entry name" value="PetN"/>
    <property type="match status" value="1"/>
</dbReference>
<dbReference type="SUPFAM" id="SSF103451">
    <property type="entry name" value="PetN subunit of the cytochrome b6f complex"/>
    <property type="match status" value="1"/>
</dbReference>
<gene>
    <name evidence="1" type="primary">petN</name>
</gene>
<accession>A4QLS6</accession>
<comment type="function">
    <text evidence="1">Component of the cytochrome b6-f complex, which mediates electron transfer between photosystem II (PSII) and photosystem I (PSI), cyclic electron flow around PSI, and state transitions.</text>
</comment>
<comment type="subunit">
    <text evidence="1">The 4 large subunits of the cytochrome b6-f complex are cytochrome b6, subunit IV (17 kDa polypeptide, PetD), cytochrome f and the Rieske protein, while the 4 small subunits are PetG, PetL, PetM and PetN. The complex functions as a dimer.</text>
</comment>
<comment type="subcellular location">
    <subcellularLocation>
        <location evidence="1">Plastid</location>
        <location evidence="1">Chloroplast thylakoid membrane</location>
        <topology evidence="1">Single-pass membrane protein</topology>
    </subcellularLocation>
</comment>
<comment type="similarity">
    <text evidence="1">Belongs to the PetN family.</text>
</comment>
<proteinExistence type="inferred from homology"/>
<reference key="1">
    <citation type="submission" date="2007-03" db="EMBL/GenBank/DDBJ databases">
        <title>Sequencing analysis of Nasturtium officinale chloroplast DNA.</title>
        <authorList>
            <person name="Hosouchi T."/>
            <person name="Tsuruoka H."/>
            <person name="Kotani H."/>
        </authorList>
    </citation>
    <scope>NUCLEOTIDE SEQUENCE [LARGE SCALE GENOMIC DNA]</scope>
</reference>
<keyword id="KW-0150">Chloroplast</keyword>
<keyword id="KW-0249">Electron transport</keyword>
<keyword id="KW-0472">Membrane</keyword>
<keyword id="KW-0602">Photosynthesis</keyword>
<keyword id="KW-0934">Plastid</keyword>
<keyword id="KW-0793">Thylakoid</keyword>
<keyword id="KW-0812">Transmembrane</keyword>
<keyword id="KW-1133">Transmembrane helix</keyword>
<keyword id="KW-0813">Transport</keyword>
<protein>
    <recommendedName>
        <fullName evidence="1">Cytochrome b6-f complex subunit 8</fullName>
    </recommendedName>
    <alternativeName>
        <fullName evidence="1">Cytochrome b6-f complex subunit PetN</fullName>
    </alternativeName>
    <alternativeName>
        <fullName evidence="1">Cytochrome b6-f complex subunit VIII</fullName>
    </alternativeName>
</protein>
<organism>
    <name type="scientific">Nasturtium officinale</name>
    <name type="common">Watercress</name>
    <name type="synonym">Rorippa nasturtium-aquaticum</name>
    <dbReference type="NCBI Taxonomy" id="65948"/>
    <lineage>
        <taxon>Eukaryota</taxon>
        <taxon>Viridiplantae</taxon>
        <taxon>Streptophyta</taxon>
        <taxon>Embryophyta</taxon>
        <taxon>Tracheophyta</taxon>
        <taxon>Spermatophyta</taxon>
        <taxon>Magnoliopsida</taxon>
        <taxon>eudicotyledons</taxon>
        <taxon>Gunneridae</taxon>
        <taxon>Pentapetalae</taxon>
        <taxon>rosids</taxon>
        <taxon>malvids</taxon>
        <taxon>Brassicales</taxon>
        <taxon>Brassicaceae</taxon>
        <taxon>Cardamineae</taxon>
        <taxon>Nasturtium</taxon>
    </lineage>
</organism>
<geneLocation type="chloroplast"/>
<sequence length="29" mass="3170">MDIVSLAWAALMVVFTFSLSLVVWGRSGL</sequence>
<evidence type="ECO:0000255" key="1">
    <source>
        <dbReference type="HAMAP-Rule" id="MF_00395"/>
    </source>
</evidence>
<name>PETN_NASOF</name>
<feature type="chain" id="PRO_0000355451" description="Cytochrome b6-f complex subunit 8">
    <location>
        <begin position="1"/>
        <end position="29"/>
    </location>
</feature>
<feature type="transmembrane region" description="Helical" evidence="1">
    <location>
        <begin position="3"/>
        <end position="23"/>
    </location>
</feature>